<gene>
    <name evidence="1" type="primary">cca</name>
    <name type="ordered locus">lp_1873</name>
</gene>
<proteinExistence type="inferred from homology"/>
<organism>
    <name type="scientific">Lactiplantibacillus plantarum (strain ATCC BAA-793 / NCIMB 8826 / WCFS1)</name>
    <name type="common">Lactobacillus plantarum</name>
    <dbReference type="NCBI Taxonomy" id="220668"/>
    <lineage>
        <taxon>Bacteria</taxon>
        <taxon>Bacillati</taxon>
        <taxon>Bacillota</taxon>
        <taxon>Bacilli</taxon>
        <taxon>Lactobacillales</taxon>
        <taxon>Lactobacillaceae</taxon>
        <taxon>Lactiplantibacillus</taxon>
    </lineage>
</organism>
<sequence length="407" mass="45140">MILTQLPAEFQAAKPIIETIEAAGYEAYFVGGCVRDTILGKPLHDVDIATSAFPAEVKQLFKRTVDTGIEHGTVMILDHGNGYETTTFRTESGYQDFRRPDQVTFVRSLKEDLKRRDFTINALAMTANGEVIDLFDGLADMEQGILRAVGVAEERFHEDALRMMRAVRFASQLGFTIESQTEQAIADNAALLAKIAVERTRVEWEKLLMGQHPVAGLTGLLTTDLYRYMPAMADQEAMLRQLMALPAWHLPSIESTWTLLSWTMQRTDEAAVRQLLKTWKTSNELINHVTAAIKALMALKHNGQLTAQENFYTGLEALKTANQVATILGFGQDQAQLVQSYASLPIHDKHELAINGGDLLKAKLVTPGPMMGQILAACLQAVVMKQVPNQQDALLDFARMVADSKNH</sequence>
<reference key="1">
    <citation type="journal article" date="2003" name="Proc. Natl. Acad. Sci. U.S.A.">
        <title>Complete genome sequence of Lactobacillus plantarum WCFS1.</title>
        <authorList>
            <person name="Kleerebezem M."/>
            <person name="Boekhorst J."/>
            <person name="van Kranenburg R."/>
            <person name="Molenaar D."/>
            <person name="Kuipers O.P."/>
            <person name="Leer R."/>
            <person name="Tarchini R."/>
            <person name="Peters S.A."/>
            <person name="Sandbrink H.M."/>
            <person name="Fiers M.W.E.J."/>
            <person name="Stiekema W."/>
            <person name="Klein Lankhorst R.M."/>
            <person name="Bron P.A."/>
            <person name="Hoffer S.M."/>
            <person name="Nierop Groot M.N."/>
            <person name="Kerkhoven R."/>
            <person name="De Vries M."/>
            <person name="Ursing B."/>
            <person name="De Vos W.M."/>
            <person name="Siezen R.J."/>
        </authorList>
    </citation>
    <scope>NUCLEOTIDE SEQUENCE [LARGE SCALE GENOMIC DNA]</scope>
    <source>
        <strain>ATCC BAA-793 / NCIMB 8826 / WCFS1</strain>
    </source>
</reference>
<reference key="2">
    <citation type="journal article" date="2012" name="J. Bacteriol.">
        <title>Complete resequencing and reannotation of the Lactobacillus plantarum WCFS1 genome.</title>
        <authorList>
            <person name="Siezen R.J."/>
            <person name="Francke C."/>
            <person name="Renckens B."/>
            <person name="Boekhorst J."/>
            <person name="Wels M."/>
            <person name="Kleerebezem M."/>
            <person name="van Hijum S.A."/>
        </authorList>
    </citation>
    <scope>NUCLEOTIDE SEQUENCE [LARGE SCALE GENOMIC DNA]</scope>
    <scope>GENOME REANNOTATION</scope>
    <source>
        <strain>ATCC BAA-793 / NCIMB 8826 / WCFS1</strain>
    </source>
</reference>
<name>CCA_LACPL</name>
<feature type="chain" id="PRO_0000139040" description="CCA-adding enzyme">
    <location>
        <begin position="1"/>
        <end position="407"/>
    </location>
</feature>
<feature type="binding site" evidence="1">
    <location>
        <position position="32"/>
    </location>
    <ligand>
        <name>ATP</name>
        <dbReference type="ChEBI" id="CHEBI:30616"/>
    </ligand>
</feature>
<feature type="binding site" evidence="1">
    <location>
        <position position="32"/>
    </location>
    <ligand>
        <name>CTP</name>
        <dbReference type="ChEBI" id="CHEBI:37563"/>
    </ligand>
</feature>
<feature type="binding site" evidence="1">
    <location>
        <position position="35"/>
    </location>
    <ligand>
        <name>ATP</name>
        <dbReference type="ChEBI" id="CHEBI:30616"/>
    </ligand>
</feature>
<feature type="binding site" evidence="1">
    <location>
        <position position="35"/>
    </location>
    <ligand>
        <name>CTP</name>
        <dbReference type="ChEBI" id="CHEBI:37563"/>
    </ligand>
</feature>
<feature type="binding site" evidence="1">
    <location>
        <position position="45"/>
    </location>
    <ligand>
        <name>Mg(2+)</name>
        <dbReference type="ChEBI" id="CHEBI:18420"/>
    </ligand>
</feature>
<feature type="binding site" evidence="1">
    <location>
        <position position="47"/>
    </location>
    <ligand>
        <name>Mg(2+)</name>
        <dbReference type="ChEBI" id="CHEBI:18420"/>
    </ligand>
</feature>
<feature type="binding site" evidence="1">
    <location>
        <position position="116"/>
    </location>
    <ligand>
        <name>ATP</name>
        <dbReference type="ChEBI" id="CHEBI:30616"/>
    </ligand>
</feature>
<feature type="binding site" evidence="1">
    <location>
        <position position="116"/>
    </location>
    <ligand>
        <name>CTP</name>
        <dbReference type="ChEBI" id="CHEBI:37563"/>
    </ligand>
</feature>
<feature type="binding site" evidence="1">
    <location>
        <position position="159"/>
    </location>
    <ligand>
        <name>ATP</name>
        <dbReference type="ChEBI" id="CHEBI:30616"/>
    </ligand>
</feature>
<feature type="binding site" evidence="1">
    <location>
        <position position="159"/>
    </location>
    <ligand>
        <name>CTP</name>
        <dbReference type="ChEBI" id="CHEBI:37563"/>
    </ligand>
</feature>
<feature type="binding site" evidence="1">
    <location>
        <position position="162"/>
    </location>
    <ligand>
        <name>ATP</name>
        <dbReference type="ChEBI" id="CHEBI:30616"/>
    </ligand>
</feature>
<feature type="binding site" evidence="1">
    <location>
        <position position="162"/>
    </location>
    <ligand>
        <name>CTP</name>
        <dbReference type="ChEBI" id="CHEBI:37563"/>
    </ligand>
</feature>
<feature type="binding site" evidence="1">
    <location>
        <position position="165"/>
    </location>
    <ligand>
        <name>ATP</name>
        <dbReference type="ChEBI" id="CHEBI:30616"/>
    </ligand>
</feature>
<feature type="binding site" evidence="1">
    <location>
        <position position="165"/>
    </location>
    <ligand>
        <name>CTP</name>
        <dbReference type="ChEBI" id="CHEBI:37563"/>
    </ligand>
</feature>
<feature type="binding site" evidence="1">
    <location>
        <position position="168"/>
    </location>
    <ligand>
        <name>ATP</name>
        <dbReference type="ChEBI" id="CHEBI:30616"/>
    </ligand>
</feature>
<feature type="binding site" evidence="1">
    <location>
        <position position="168"/>
    </location>
    <ligand>
        <name>CTP</name>
        <dbReference type="ChEBI" id="CHEBI:37563"/>
    </ligand>
</feature>
<comment type="function">
    <text evidence="1">Catalyzes the addition and repair of the essential 3'-terminal CCA sequence in tRNAs without using a nucleic acid template. Adds these three nucleotides in the order of C, C, and A to the tRNA nucleotide-73, using CTP and ATP as substrates and producing inorganic pyrophosphate. tRNA 3'-terminal CCA addition is required both for tRNA processing and repair. Also involved in tRNA surveillance by mediating tandem CCA addition to generate a CCACCA at the 3' terminus of unstable tRNAs. While stable tRNAs receive only 3'-terminal CCA, unstable tRNAs are marked with CCACCA and rapidly degraded.</text>
</comment>
<comment type="catalytic activity">
    <reaction evidence="1">
        <text>a tRNA precursor + 2 CTP + ATP = a tRNA with a 3' CCA end + 3 diphosphate</text>
        <dbReference type="Rhea" id="RHEA:14433"/>
        <dbReference type="Rhea" id="RHEA-COMP:10465"/>
        <dbReference type="Rhea" id="RHEA-COMP:10468"/>
        <dbReference type="ChEBI" id="CHEBI:30616"/>
        <dbReference type="ChEBI" id="CHEBI:33019"/>
        <dbReference type="ChEBI" id="CHEBI:37563"/>
        <dbReference type="ChEBI" id="CHEBI:74896"/>
        <dbReference type="ChEBI" id="CHEBI:83071"/>
        <dbReference type="EC" id="2.7.7.72"/>
    </reaction>
</comment>
<comment type="catalytic activity">
    <reaction evidence="1">
        <text>a tRNA with a 3' CCA end + 2 CTP + ATP = a tRNA with a 3' CCACCA end + 3 diphosphate</text>
        <dbReference type="Rhea" id="RHEA:76235"/>
        <dbReference type="Rhea" id="RHEA-COMP:10468"/>
        <dbReference type="Rhea" id="RHEA-COMP:18655"/>
        <dbReference type="ChEBI" id="CHEBI:30616"/>
        <dbReference type="ChEBI" id="CHEBI:33019"/>
        <dbReference type="ChEBI" id="CHEBI:37563"/>
        <dbReference type="ChEBI" id="CHEBI:83071"/>
        <dbReference type="ChEBI" id="CHEBI:195187"/>
    </reaction>
    <physiologicalReaction direction="left-to-right" evidence="1">
        <dbReference type="Rhea" id="RHEA:76236"/>
    </physiologicalReaction>
</comment>
<comment type="cofactor">
    <cofactor evidence="1">
        <name>Mg(2+)</name>
        <dbReference type="ChEBI" id="CHEBI:18420"/>
    </cofactor>
</comment>
<comment type="subunit">
    <text evidence="1">Homodimer.</text>
</comment>
<comment type="miscellaneous">
    <text evidence="1">A single active site specifically recognizes both ATP and CTP and is responsible for their addition.</text>
</comment>
<comment type="similarity">
    <text evidence="1">Belongs to the tRNA nucleotidyltransferase/poly(A) polymerase family. Bacterial CCA-adding enzyme type 3 subfamily.</text>
</comment>
<protein>
    <recommendedName>
        <fullName evidence="1">CCA-adding enzyme</fullName>
        <ecNumber evidence="1">2.7.7.72</ecNumber>
    </recommendedName>
    <alternativeName>
        <fullName evidence="1">CCA tRNA nucleotidyltransferase</fullName>
    </alternativeName>
    <alternativeName>
        <fullName evidence="1">tRNA CCA-pyrophosphorylase</fullName>
    </alternativeName>
    <alternativeName>
        <fullName evidence="1">tRNA adenylyl-/cytidylyl- transferase</fullName>
    </alternativeName>
    <alternativeName>
        <fullName evidence="1">tRNA nucleotidyltransferase</fullName>
    </alternativeName>
    <alternativeName>
        <fullName evidence="1">tRNA-NT</fullName>
    </alternativeName>
</protein>
<accession>Q88W02</accession>
<accession>F9UPK3</accession>
<evidence type="ECO:0000255" key="1">
    <source>
        <dbReference type="HAMAP-Rule" id="MF_01263"/>
    </source>
</evidence>
<dbReference type="EC" id="2.7.7.72" evidence="1"/>
<dbReference type="EMBL" id="AL935263">
    <property type="protein sequence ID" value="CCC79142.1"/>
    <property type="molecule type" value="Genomic_DNA"/>
</dbReference>
<dbReference type="RefSeq" id="WP_011101577.1">
    <property type="nucleotide sequence ID" value="NC_004567.2"/>
</dbReference>
<dbReference type="RefSeq" id="YP_004889656.1">
    <property type="nucleotide sequence ID" value="NC_004567.2"/>
</dbReference>
<dbReference type="SMR" id="Q88W02"/>
<dbReference type="STRING" id="220668.lp_1873"/>
<dbReference type="EnsemblBacteria" id="CCC79142">
    <property type="protein sequence ID" value="CCC79142"/>
    <property type="gene ID" value="lp_1873"/>
</dbReference>
<dbReference type="KEGG" id="lpl:lp_1873"/>
<dbReference type="PATRIC" id="fig|220668.9.peg.1579"/>
<dbReference type="eggNOG" id="COG0617">
    <property type="taxonomic scope" value="Bacteria"/>
</dbReference>
<dbReference type="HOGENOM" id="CLU_015961_3_0_9"/>
<dbReference type="OrthoDB" id="9805698at2"/>
<dbReference type="PhylomeDB" id="Q88W02"/>
<dbReference type="Proteomes" id="UP000000432">
    <property type="component" value="Chromosome"/>
</dbReference>
<dbReference type="GO" id="GO:0005524">
    <property type="term" value="F:ATP binding"/>
    <property type="evidence" value="ECO:0007669"/>
    <property type="project" value="UniProtKB-UniRule"/>
</dbReference>
<dbReference type="GO" id="GO:0004810">
    <property type="term" value="F:CCA tRNA nucleotidyltransferase activity"/>
    <property type="evidence" value="ECO:0007669"/>
    <property type="project" value="UniProtKB-UniRule"/>
</dbReference>
<dbReference type="GO" id="GO:0000287">
    <property type="term" value="F:magnesium ion binding"/>
    <property type="evidence" value="ECO:0007669"/>
    <property type="project" value="UniProtKB-UniRule"/>
</dbReference>
<dbReference type="GO" id="GO:0000049">
    <property type="term" value="F:tRNA binding"/>
    <property type="evidence" value="ECO:0007669"/>
    <property type="project" value="UniProtKB-UniRule"/>
</dbReference>
<dbReference type="GO" id="GO:0042245">
    <property type="term" value="P:RNA repair"/>
    <property type="evidence" value="ECO:0007669"/>
    <property type="project" value="UniProtKB-KW"/>
</dbReference>
<dbReference type="GO" id="GO:0001680">
    <property type="term" value="P:tRNA 3'-terminal CCA addition"/>
    <property type="evidence" value="ECO:0007669"/>
    <property type="project" value="UniProtKB-UniRule"/>
</dbReference>
<dbReference type="CDD" id="cd05398">
    <property type="entry name" value="NT_ClassII-CCAase"/>
    <property type="match status" value="1"/>
</dbReference>
<dbReference type="Gene3D" id="1.10.110.30">
    <property type="match status" value="1"/>
</dbReference>
<dbReference type="Gene3D" id="1.10.246.80">
    <property type="match status" value="1"/>
</dbReference>
<dbReference type="Gene3D" id="1.20.58.560">
    <property type="match status" value="1"/>
</dbReference>
<dbReference type="Gene3D" id="3.30.460.10">
    <property type="entry name" value="Beta Polymerase, domain 2"/>
    <property type="match status" value="1"/>
</dbReference>
<dbReference type="HAMAP" id="MF_01263">
    <property type="entry name" value="CCA_bact_type3"/>
    <property type="match status" value="1"/>
</dbReference>
<dbReference type="InterPro" id="IPR050264">
    <property type="entry name" value="Bact_CCA-adding_enz_type3_sf"/>
</dbReference>
<dbReference type="InterPro" id="IPR032810">
    <property type="entry name" value="CCA-adding_enz_C"/>
</dbReference>
<dbReference type="InterPro" id="IPR023068">
    <property type="entry name" value="CCA-adding_enz_firmicutes"/>
</dbReference>
<dbReference type="InterPro" id="IPR043519">
    <property type="entry name" value="NT_sf"/>
</dbReference>
<dbReference type="InterPro" id="IPR002646">
    <property type="entry name" value="PolA_pol_head_dom"/>
</dbReference>
<dbReference type="InterPro" id="IPR032828">
    <property type="entry name" value="PolyA_RNA-bd"/>
</dbReference>
<dbReference type="NCBIfam" id="NF009814">
    <property type="entry name" value="PRK13299.1"/>
    <property type="match status" value="1"/>
</dbReference>
<dbReference type="PANTHER" id="PTHR46173">
    <property type="entry name" value="CCA TRNA NUCLEOTIDYLTRANSFERASE 1, MITOCHONDRIAL"/>
    <property type="match status" value="1"/>
</dbReference>
<dbReference type="PANTHER" id="PTHR46173:SF1">
    <property type="entry name" value="CCA TRNA NUCLEOTIDYLTRANSFERASE 1, MITOCHONDRIAL"/>
    <property type="match status" value="1"/>
</dbReference>
<dbReference type="Pfam" id="PF01743">
    <property type="entry name" value="PolyA_pol"/>
    <property type="match status" value="1"/>
</dbReference>
<dbReference type="Pfam" id="PF12627">
    <property type="entry name" value="PolyA_pol_RNAbd"/>
    <property type="match status" value="1"/>
</dbReference>
<dbReference type="Pfam" id="PF13735">
    <property type="entry name" value="tRNA_NucTran2_2"/>
    <property type="match status" value="1"/>
</dbReference>
<dbReference type="SUPFAM" id="SSF81301">
    <property type="entry name" value="Nucleotidyltransferase"/>
    <property type="match status" value="1"/>
</dbReference>
<dbReference type="SUPFAM" id="SSF81891">
    <property type="entry name" value="Poly A polymerase C-terminal region-like"/>
    <property type="match status" value="1"/>
</dbReference>
<keyword id="KW-0067">ATP-binding</keyword>
<keyword id="KW-0460">Magnesium</keyword>
<keyword id="KW-0479">Metal-binding</keyword>
<keyword id="KW-0547">Nucleotide-binding</keyword>
<keyword id="KW-0548">Nucleotidyltransferase</keyword>
<keyword id="KW-1185">Reference proteome</keyword>
<keyword id="KW-0692">RNA repair</keyword>
<keyword id="KW-0694">RNA-binding</keyword>
<keyword id="KW-0808">Transferase</keyword>
<keyword id="KW-0819">tRNA processing</keyword>